<dbReference type="EC" id="2.3.1.286" evidence="1 2"/>
<dbReference type="EMBL" id="BA000002">
    <property type="protein sequence ID" value="BAA80785.2"/>
    <property type="molecule type" value="Genomic_DNA"/>
</dbReference>
<dbReference type="PIR" id="D72562">
    <property type="entry name" value="D72562"/>
</dbReference>
<dbReference type="RefSeq" id="WP_010866589.1">
    <property type="nucleotide sequence ID" value="NC_000854.2"/>
</dbReference>
<dbReference type="SMR" id="Q9YB13"/>
<dbReference type="STRING" id="272557.APE_1782.1"/>
<dbReference type="EnsemblBacteria" id="BAA80785">
    <property type="protein sequence ID" value="BAA80785"/>
    <property type="gene ID" value="APE_1782.1"/>
</dbReference>
<dbReference type="GeneID" id="1446235"/>
<dbReference type="KEGG" id="ape:APE_1782.1"/>
<dbReference type="PATRIC" id="fig|272557.25.peg.1194"/>
<dbReference type="eggNOG" id="arCOG04248">
    <property type="taxonomic scope" value="Archaea"/>
</dbReference>
<dbReference type="Proteomes" id="UP000002518">
    <property type="component" value="Chromosome"/>
</dbReference>
<dbReference type="GO" id="GO:0005737">
    <property type="term" value="C:cytoplasm"/>
    <property type="evidence" value="ECO:0007669"/>
    <property type="project" value="UniProtKB-SubCell"/>
</dbReference>
<dbReference type="GO" id="GO:0017136">
    <property type="term" value="F:histone deacetylase activity, NAD-dependent"/>
    <property type="evidence" value="ECO:0007669"/>
    <property type="project" value="TreeGrafter"/>
</dbReference>
<dbReference type="GO" id="GO:0070403">
    <property type="term" value="F:NAD+ binding"/>
    <property type="evidence" value="ECO:0007669"/>
    <property type="project" value="UniProtKB-UniRule"/>
</dbReference>
<dbReference type="GO" id="GO:0036054">
    <property type="term" value="F:protein-malonyllysine demalonylase activity"/>
    <property type="evidence" value="ECO:0007669"/>
    <property type="project" value="InterPro"/>
</dbReference>
<dbReference type="GO" id="GO:0036055">
    <property type="term" value="F:protein-succinyllysine desuccinylase activity"/>
    <property type="evidence" value="ECO:0007669"/>
    <property type="project" value="UniProtKB-UniRule"/>
</dbReference>
<dbReference type="GO" id="GO:0008270">
    <property type="term" value="F:zinc ion binding"/>
    <property type="evidence" value="ECO:0007669"/>
    <property type="project" value="UniProtKB-UniRule"/>
</dbReference>
<dbReference type="CDD" id="cd01412">
    <property type="entry name" value="SIRT5_Af1_CobB"/>
    <property type="match status" value="1"/>
</dbReference>
<dbReference type="Gene3D" id="3.30.1600.10">
    <property type="entry name" value="SIR2/SIRT2 'Small Domain"/>
    <property type="match status" value="1"/>
</dbReference>
<dbReference type="Gene3D" id="3.40.50.1220">
    <property type="entry name" value="TPP-binding domain"/>
    <property type="match status" value="1"/>
</dbReference>
<dbReference type="HAMAP" id="MF_01121">
    <property type="entry name" value="Sirtuin_ClassIII"/>
    <property type="match status" value="1"/>
</dbReference>
<dbReference type="InterPro" id="IPR029035">
    <property type="entry name" value="DHS-like_NAD/FAD-binding_dom"/>
</dbReference>
<dbReference type="InterPro" id="IPR050134">
    <property type="entry name" value="NAD-dep_sirtuin_deacylases"/>
</dbReference>
<dbReference type="InterPro" id="IPR003000">
    <property type="entry name" value="Sirtuin"/>
</dbReference>
<dbReference type="InterPro" id="IPR026591">
    <property type="entry name" value="Sirtuin_cat_small_dom_sf"/>
</dbReference>
<dbReference type="InterPro" id="IPR027546">
    <property type="entry name" value="Sirtuin_class_III"/>
</dbReference>
<dbReference type="InterPro" id="IPR026590">
    <property type="entry name" value="Ssirtuin_cat_dom"/>
</dbReference>
<dbReference type="NCBIfam" id="NF001753">
    <property type="entry name" value="PRK00481.1-3"/>
    <property type="match status" value="1"/>
</dbReference>
<dbReference type="NCBIfam" id="NF040867">
    <property type="entry name" value="prot_deacyl_CobB"/>
    <property type="match status" value="1"/>
</dbReference>
<dbReference type="PANTHER" id="PTHR11085">
    <property type="entry name" value="NAD-DEPENDENT PROTEIN DEACYLASE SIRTUIN-5, MITOCHONDRIAL-RELATED"/>
    <property type="match status" value="1"/>
</dbReference>
<dbReference type="PANTHER" id="PTHR11085:SF10">
    <property type="entry name" value="NAD-DEPENDENT PROTEIN DEACYLASE SIRTUIN-5, MITOCHONDRIAL-RELATED"/>
    <property type="match status" value="1"/>
</dbReference>
<dbReference type="Pfam" id="PF02146">
    <property type="entry name" value="SIR2"/>
    <property type="match status" value="1"/>
</dbReference>
<dbReference type="SUPFAM" id="SSF52467">
    <property type="entry name" value="DHS-like NAD/FAD-binding domain"/>
    <property type="match status" value="1"/>
</dbReference>
<dbReference type="PROSITE" id="PS50305">
    <property type="entry name" value="SIRTUIN"/>
    <property type="match status" value="1"/>
</dbReference>
<feature type="chain" id="PRO_0000110376" description="NAD-dependent protein deacylase">
    <location>
        <begin position="1"/>
        <end position="245"/>
    </location>
</feature>
<feature type="domain" description="Deacetylase sirtuin-type" evidence="2">
    <location>
        <begin position="1"/>
        <end position="245"/>
    </location>
</feature>
<feature type="active site" description="Proton acceptor" evidence="2">
    <location>
        <position position="118"/>
    </location>
</feature>
<feature type="binding site" evidence="1">
    <location>
        <begin position="22"/>
        <end position="41"/>
    </location>
    <ligand>
        <name>NAD(+)</name>
        <dbReference type="ChEBI" id="CHEBI:57540"/>
    </ligand>
</feature>
<feature type="binding site" evidence="1">
    <location>
        <position position="66"/>
    </location>
    <ligand>
        <name>substrate</name>
    </ligand>
</feature>
<feature type="binding site" evidence="1">
    <location>
        <position position="69"/>
    </location>
    <ligand>
        <name>substrate</name>
    </ligand>
</feature>
<feature type="binding site" evidence="1">
    <location>
        <begin position="100"/>
        <end position="103"/>
    </location>
    <ligand>
        <name>NAD(+)</name>
        <dbReference type="ChEBI" id="CHEBI:57540"/>
    </ligand>
</feature>
<feature type="binding site" evidence="1">
    <location>
        <position position="126"/>
    </location>
    <ligand>
        <name>Zn(2+)</name>
        <dbReference type="ChEBI" id="CHEBI:29105"/>
    </ligand>
</feature>
<feature type="binding site" evidence="1">
    <location>
        <position position="129"/>
    </location>
    <ligand>
        <name>Zn(2+)</name>
        <dbReference type="ChEBI" id="CHEBI:29105"/>
    </ligand>
</feature>
<feature type="binding site" evidence="1">
    <location>
        <position position="146"/>
    </location>
    <ligand>
        <name>Zn(2+)</name>
        <dbReference type="ChEBI" id="CHEBI:29105"/>
    </ligand>
</feature>
<feature type="binding site" evidence="1">
    <location>
        <position position="149"/>
    </location>
    <ligand>
        <name>Zn(2+)</name>
        <dbReference type="ChEBI" id="CHEBI:29105"/>
    </ligand>
</feature>
<feature type="binding site" evidence="1">
    <location>
        <begin position="186"/>
        <end position="188"/>
    </location>
    <ligand>
        <name>NAD(+)</name>
        <dbReference type="ChEBI" id="CHEBI:57540"/>
    </ligand>
</feature>
<feature type="binding site" evidence="1">
    <location>
        <begin position="212"/>
        <end position="214"/>
    </location>
    <ligand>
        <name>NAD(+)</name>
        <dbReference type="ChEBI" id="CHEBI:57540"/>
    </ligand>
</feature>
<feature type="binding site" evidence="1">
    <location>
        <position position="241"/>
    </location>
    <ligand>
        <name>NAD(+)</name>
        <dbReference type="ChEBI" id="CHEBI:57540"/>
    </ligand>
</feature>
<reference key="1">
    <citation type="journal article" date="1999" name="DNA Res.">
        <title>Complete genome sequence of an aerobic hyper-thermophilic crenarchaeon, Aeropyrum pernix K1.</title>
        <authorList>
            <person name="Kawarabayasi Y."/>
            <person name="Hino Y."/>
            <person name="Horikawa H."/>
            <person name="Yamazaki S."/>
            <person name="Haikawa Y."/>
            <person name="Jin-no K."/>
            <person name="Takahashi M."/>
            <person name="Sekine M."/>
            <person name="Baba S."/>
            <person name="Ankai A."/>
            <person name="Kosugi H."/>
            <person name="Hosoyama A."/>
            <person name="Fukui S."/>
            <person name="Nagai Y."/>
            <person name="Nishijima K."/>
            <person name="Nakazawa H."/>
            <person name="Takamiya M."/>
            <person name="Masuda S."/>
            <person name="Funahashi T."/>
            <person name="Tanaka T."/>
            <person name="Kudoh Y."/>
            <person name="Yamazaki J."/>
            <person name="Kushida N."/>
            <person name="Oguchi A."/>
            <person name="Aoki K."/>
            <person name="Kubota K."/>
            <person name="Nakamura Y."/>
            <person name="Nomura N."/>
            <person name="Sako Y."/>
            <person name="Kikuchi H."/>
        </authorList>
    </citation>
    <scope>NUCLEOTIDE SEQUENCE [LARGE SCALE GENOMIC DNA]</scope>
    <source>
        <strain>ATCC 700893 / DSM 11879 / JCM 9820 / NBRC 100138 / K1</strain>
    </source>
</reference>
<comment type="function">
    <text evidence="1">NAD-dependent lysine deacetylase and desuccinylase that specifically removes acetyl and succinyl groups on target proteins. Modulates the activities of several proteins which are inactive in their acylated form. Deacetylates the N-terminal lysine residue of Alba, the major archaeal chromatin protein and that, in turn, increases Alba's DNA binding affinity, thereby repressing transcription.</text>
</comment>
<comment type="catalytic activity">
    <reaction evidence="1">
        <text>N(6)-acetyl-L-lysyl-[protein] + NAD(+) + H2O = 2''-O-acetyl-ADP-D-ribose + nicotinamide + L-lysyl-[protein]</text>
        <dbReference type="Rhea" id="RHEA:43636"/>
        <dbReference type="Rhea" id="RHEA-COMP:9752"/>
        <dbReference type="Rhea" id="RHEA-COMP:10731"/>
        <dbReference type="ChEBI" id="CHEBI:15377"/>
        <dbReference type="ChEBI" id="CHEBI:17154"/>
        <dbReference type="ChEBI" id="CHEBI:29969"/>
        <dbReference type="ChEBI" id="CHEBI:57540"/>
        <dbReference type="ChEBI" id="CHEBI:61930"/>
        <dbReference type="ChEBI" id="CHEBI:83767"/>
        <dbReference type="EC" id="2.3.1.286"/>
    </reaction>
</comment>
<comment type="catalytic activity">
    <reaction evidence="1">
        <text>N(6)-succinyl-L-lysyl-[protein] + NAD(+) + H2O = 2''-O-succinyl-ADP-D-ribose + nicotinamide + L-lysyl-[protein]</text>
        <dbReference type="Rhea" id="RHEA:47668"/>
        <dbReference type="Rhea" id="RHEA-COMP:9752"/>
        <dbReference type="Rhea" id="RHEA-COMP:11877"/>
        <dbReference type="ChEBI" id="CHEBI:15377"/>
        <dbReference type="ChEBI" id="CHEBI:17154"/>
        <dbReference type="ChEBI" id="CHEBI:29969"/>
        <dbReference type="ChEBI" id="CHEBI:57540"/>
        <dbReference type="ChEBI" id="CHEBI:87830"/>
        <dbReference type="ChEBI" id="CHEBI:87832"/>
    </reaction>
</comment>
<comment type="cofactor">
    <cofactor evidence="1">
        <name>Zn(2+)</name>
        <dbReference type="ChEBI" id="CHEBI:29105"/>
    </cofactor>
    <text evidence="1">Binds 1 zinc ion per subunit.</text>
</comment>
<comment type="subcellular location">
    <subcellularLocation>
        <location evidence="1">Cytoplasm</location>
    </subcellularLocation>
</comment>
<comment type="domain">
    <text evidence="1">2 residues (Tyr-66 and Arg-69) present in a large hydrophobic pocket are probably involved in substrate specificity. They are important for desuccinylation activity, but dispensable for deacetylation activity.</text>
</comment>
<comment type="similarity">
    <text evidence="1">Belongs to the sirtuin family. Class III subfamily.</text>
</comment>
<evidence type="ECO:0000255" key="1">
    <source>
        <dbReference type="HAMAP-Rule" id="MF_01121"/>
    </source>
</evidence>
<evidence type="ECO:0000255" key="2">
    <source>
        <dbReference type="PROSITE-ProRule" id="PRU00236"/>
    </source>
</evidence>
<gene>
    <name evidence="1" type="primary">cobB</name>
    <name type="ordered locus">APE_1782.1</name>
</gene>
<protein>
    <recommendedName>
        <fullName evidence="1">NAD-dependent protein deacylase</fullName>
        <ecNumber evidence="1 2">2.3.1.286</ecNumber>
    </recommendedName>
    <alternativeName>
        <fullName evidence="1">Regulatory protein SIR2 homolog</fullName>
    </alternativeName>
</protein>
<keyword id="KW-0963">Cytoplasm</keyword>
<keyword id="KW-0479">Metal-binding</keyword>
<keyword id="KW-0520">NAD</keyword>
<keyword id="KW-1185">Reference proteome</keyword>
<keyword id="KW-0804">Transcription</keyword>
<keyword id="KW-0805">Transcription regulation</keyword>
<keyword id="KW-0808">Transferase</keyword>
<keyword id="KW-0862">Zinc</keyword>
<accession>Q9YB13</accession>
<name>NPD_AERPE</name>
<proteinExistence type="inferred from homology"/>
<sequence length="245" mass="27096">MEAVWESARILANSRFAVAFTGAGISAESGIPTFRGKDGLWSRFDPRDLATPEAFNRDPRLVWEWYSWRIERVLAAKPNKAHRLLARLEDSGVLKAVITQNVDGLHRRAGSRRVLELHGNVLRARCTRCGSKLEWREKPSNLPPSCPRCGGVLRPDVVWFGEPLDTSLLEEAFGLARRSDVMIIIGTSGAVDPAGLLPLAAKESGATLINVNPEPNRYSGVADIELRMRAVEFAERLSRAMGIDI</sequence>
<organism>
    <name type="scientific">Aeropyrum pernix (strain ATCC 700893 / DSM 11879 / JCM 9820 / NBRC 100138 / K1)</name>
    <dbReference type="NCBI Taxonomy" id="272557"/>
    <lineage>
        <taxon>Archaea</taxon>
        <taxon>Thermoproteota</taxon>
        <taxon>Thermoprotei</taxon>
        <taxon>Desulfurococcales</taxon>
        <taxon>Desulfurococcaceae</taxon>
        <taxon>Aeropyrum</taxon>
    </lineage>
</organism>